<feature type="chain" id="PRO_0000257938" description="Cytochrome b">
    <location>
        <begin position="1"/>
        <end position="379"/>
    </location>
</feature>
<feature type="transmembrane region" description="Helical" evidence="2">
    <location>
        <begin position="33"/>
        <end position="53"/>
    </location>
</feature>
<feature type="transmembrane region" description="Helical" evidence="2">
    <location>
        <begin position="77"/>
        <end position="98"/>
    </location>
</feature>
<feature type="transmembrane region" description="Helical" evidence="2">
    <location>
        <begin position="113"/>
        <end position="133"/>
    </location>
</feature>
<feature type="transmembrane region" description="Helical" evidence="2">
    <location>
        <begin position="178"/>
        <end position="198"/>
    </location>
</feature>
<feature type="transmembrane region" description="Helical" evidence="2">
    <location>
        <begin position="226"/>
        <end position="246"/>
    </location>
</feature>
<feature type="transmembrane region" description="Helical" evidence="2">
    <location>
        <begin position="288"/>
        <end position="308"/>
    </location>
</feature>
<feature type="transmembrane region" description="Helical" evidence="2">
    <location>
        <begin position="320"/>
        <end position="340"/>
    </location>
</feature>
<feature type="transmembrane region" description="Helical" evidence="2">
    <location>
        <begin position="347"/>
        <end position="367"/>
    </location>
</feature>
<feature type="binding site" description="axial binding residue" evidence="2">
    <location>
        <position position="83"/>
    </location>
    <ligand>
        <name>heme b</name>
        <dbReference type="ChEBI" id="CHEBI:60344"/>
        <label>b562</label>
    </ligand>
    <ligandPart>
        <name>Fe</name>
        <dbReference type="ChEBI" id="CHEBI:18248"/>
    </ligandPart>
</feature>
<feature type="binding site" description="axial binding residue" evidence="2">
    <location>
        <position position="97"/>
    </location>
    <ligand>
        <name>heme b</name>
        <dbReference type="ChEBI" id="CHEBI:60344"/>
        <label>b566</label>
    </ligand>
    <ligandPart>
        <name>Fe</name>
        <dbReference type="ChEBI" id="CHEBI:18248"/>
    </ligandPart>
</feature>
<feature type="binding site" description="axial binding residue" evidence="2">
    <location>
        <position position="182"/>
    </location>
    <ligand>
        <name>heme b</name>
        <dbReference type="ChEBI" id="CHEBI:60344"/>
        <label>b562</label>
    </ligand>
    <ligandPart>
        <name>Fe</name>
        <dbReference type="ChEBI" id="CHEBI:18248"/>
    </ligandPart>
</feature>
<feature type="binding site" description="axial binding residue" evidence="2">
    <location>
        <position position="196"/>
    </location>
    <ligand>
        <name>heme b</name>
        <dbReference type="ChEBI" id="CHEBI:60344"/>
        <label>b566</label>
    </ligand>
    <ligandPart>
        <name>Fe</name>
        <dbReference type="ChEBI" id="CHEBI:18248"/>
    </ligandPart>
</feature>
<feature type="binding site" evidence="2">
    <location>
        <position position="201"/>
    </location>
    <ligand>
        <name>a ubiquinone</name>
        <dbReference type="ChEBI" id="CHEBI:16389"/>
    </ligand>
</feature>
<feature type="sequence variant" description="In strain: Isolate MVZ 185904.">
    <original>L</original>
    <variation>M</variation>
    <location>
        <position position="198"/>
    </location>
</feature>
<feature type="sequence variant" description="In strain: Isolate MVZ 185904.">
    <original>T</original>
    <variation>S</variation>
    <location>
        <position position="203"/>
    </location>
</feature>
<feature type="sequence variant" description="In strain: Isolate MVZ 185904.">
    <original>P</original>
    <variation>S</variation>
    <location>
        <position position="208"/>
    </location>
</feature>
<feature type="sequence variant" description="In strain: Isolate MVZ 185904.">
    <original>T</original>
    <variation>A</variation>
    <location>
        <position position="368"/>
    </location>
</feature>
<evidence type="ECO:0000250" key="1"/>
<evidence type="ECO:0000250" key="2">
    <source>
        <dbReference type="UniProtKB" id="P00157"/>
    </source>
</evidence>
<evidence type="ECO:0000255" key="3">
    <source>
        <dbReference type="PROSITE-ProRule" id="PRU00967"/>
    </source>
</evidence>
<evidence type="ECO:0000255" key="4">
    <source>
        <dbReference type="PROSITE-ProRule" id="PRU00968"/>
    </source>
</evidence>
<geneLocation type="mitochondrion"/>
<organism>
    <name type="scientific">Pygoderma bilabiatum</name>
    <name type="common">Ipanema broad-nosed bat</name>
    <dbReference type="NCBI Taxonomy" id="148037"/>
    <lineage>
        <taxon>Eukaryota</taxon>
        <taxon>Metazoa</taxon>
        <taxon>Chordata</taxon>
        <taxon>Craniata</taxon>
        <taxon>Vertebrata</taxon>
        <taxon>Euteleostomi</taxon>
        <taxon>Mammalia</taxon>
        <taxon>Eutheria</taxon>
        <taxon>Laurasiatheria</taxon>
        <taxon>Chiroptera</taxon>
        <taxon>Yangochiroptera</taxon>
        <taxon>Phyllostomidae</taxon>
        <taxon>Stenodermatinae</taxon>
        <taxon>Pygoderma</taxon>
    </lineage>
</organism>
<proteinExistence type="inferred from homology"/>
<dbReference type="EMBL" id="AY604437">
    <property type="protein sequence ID" value="AAT46140.1"/>
    <property type="molecule type" value="Genomic_DNA"/>
</dbReference>
<dbReference type="EMBL" id="AY604438">
    <property type="protein sequence ID" value="AAT46141.1"/>
    <property type="molecule type" value="Genomic_DNA"/>
</dbReference>
<dbReference type="SMR" id="Q53AL7"/>
<dbReference type="GO" id="GO:0005743">
    <property type="term" value="C:mitochondrial inner membrane"/>
    <property type="evidence" value="ECO:0007669"/>
    <property type="project" value="UniProtKB-SubCell"/>
</dbReference>
<dbReference type="GO" id="GO:0045275">
    <property type="term" value="C:respiratory chain complex III"/>
    <property type="evidence" value="ECO:0007669"/>
    <property type="project" value="InterPro"/>
</dbReference>
<dbReference type="GO" id="GO:0046872">
    <property type="term" value="F:metal ion binding"/>
    <property type="evidence" value="ECO:0007669"/>
    <property type="project" value="UniProtKB-KW"/>
</dbReference>
<dbReference type="GO" id="GO:0008121">
    <property type="term" value="F:ubiquinol-cytochrome-c reductase activity"/>
    <property type="evidence" value="ECO:0007669"/>
    <property type="project" value="InterPro"/>
</dbReference>
<dbReference type="GO" id="GO:0006122">
    <property type="term" value="P:mitochondrial electron transport, ubiquinol to cytochrome c"/>
    <property type="evidence" value="ECO:0007669"/>
    <property type="project" value="TreeGrafter"/>
</dbReference>
<dbReference type="CDD" id="cd00290">
    <property type="entry name" value="cytochrome_b_C"/>
    <property type="match status" value="1"/>
</dbReference>
<dbReference type="CDD" id="cd00284">
    <property type="entry name" value="Cytochrome_b_N"/>
    <property type="match status" value="1"/>
</dbReference>
<dbReference type="FunFam" id="1.20.810.10:FF:000002">
    <property type="entry name" value="Cytochrome b"/>
    <property type="match status" value="1"/>
</dbReference>
<dbReference type="Gene3D" id="1.20.810.10">
    <property type="entry name" value="Cytochrome Bc1 Complex, Chain C"/>
    <property type="match status" value="1"/>
</dbReference>
<dbReference type="InterPro" id="IPR005798">
    <property type="entry name" value="Cyt_b/b6_C"/>
</dbReference>
<dbReference type="InterPro" id="IPR036150">
    <property type="entry name" value="Cyt_b/b6_C_sf"/>
</dbReference>
<dbReference type="InterPro" id="IPR005797">
    <property type="entry name" value="Cyt_b/b6_N"/>
</dbReference>
<dbReference type="InterPro" id="IPR027387">
    <property type="entry name" value="Cytb/b6-like_sf"/>
</dbReference>
<dbReference type="InterPro" id="IPR030689">
    <property type="entry name" value="Cytochrome_b"/>
</dbReference>
<dbReference type="InterPro" id="IPR048260">
    <property type="entry name" value="Cytochrome_b_C_euk/bac"/>
</dbReference>
<dbReference type="InterPro" id="IPR048259">
    <property type="entry name" value="Cytochrome_b_N_euk/bac"/>
</dbReference>
<dbReference type="InterPro" id="IPR016174">
    <property type="entry name" value="Di-haem_cyt_TM"/>
</dbReference>
<dbReference type="PANTHER" id="PTHR19271">
    <property type="entry name" value="CYTOCHROME B"/>
    <property type="match status" value="1"/>
</dbReference>
<dbReference type="PANTHER" id="PTHR19271:SF16">
    <property type="entry name" value="CYTOCHROME B"/>
    <property type="match status" value="1"/>
</dbReference>
<dbReference type="Pfam" id="PF00032">
    <property type="entry name" value="Cytochrom_B_C"/>
    <property type="match status" value="1"/>
</dbReference>
<dbReference type="Pfam" id="PF00033">
    <property type="entry name" value="Cytochrome_B"/>
    <property type="match status" value="1"/>
</dbReference>
<dbReference type="PIRSF" id="PIRSF038885">
    <property type="entry name" value="COB"/>
    <property type="match status" value="1"/>
</dbReference>
<dbReference type="SUPFAM" id="SSF81648">
    <property type="entry name" value="a domain/subunit of cytochrome bc1 complex (Ubiquinol-cytochrome c reductase)"/>
    <property type="match status" value="1"/>
</dbReference>
<dbReference type="SUPFAM" id="SSF81342">
    <property type="entry name" value="Transmembrane di-heme cytochromes"/>
    <property type="match status" value="1"/>
</dbReference>
<dbReference type="PROSITE" id="PS51003">
    <property type="entry name" value="CYTB_CTER"/>
    <property type="match status" value="1"/>
</dbReference>
<dbReference type="PROSITE" id="PS51002">
    <property type="entry name" value="CYTB_NTER"/>
    <property type="match status" value="1"/>
</dbReference>
<keyword id="KW-0249">Electron transport</keyword>
<keyword id="KW-0349">Heme</keyword>
<keyword id="KW-0408">Iron</keyword>
<keyword id="KW-0472">Membrane</keyword>
<keyword id="KW-0479">Metal-binding</keyword>
<keyword id="KW-0496">Mitochondrion</keyword>
<keyword id="KW-0999">Mitochondrion inner membrane</keyword>
<keyword id="KW-0679">Respiratory chain</keyword>
<keyword id="KW-0812">Transmembrane</keyword>
<keyword id="KW-1133">Transmembrane helix</keyword>
<keyword id="KW-0813">Transport</keyword>
<keyword id="KW-0830">Ubiquinone</keyword>
<accession>Q53AL7</accession>
<accession>Q53AL6</accession>
<gene>
    <name type="primary">MT-CYB</name>
    <name type="synonym">COB</name>
    <name type="synonym">CYTB</name>
    <name type="synonym">MTCYB</name>
</gene>
<reference key="1">
    <citation type="journal article" date="2007" name="J. Biogeogr.">
        <title>Short-faced bats (Phyllostomidae: Stenodermatina): a Caribbean radiation of strict frugivores.</title>
        <authorList>
            <person name="Davalos L.M."/>
        </authorList>
        <dbReference type="AGRICOLA" id="IND43870880"/>
    </citation>
    <scope>NUCLEOTIDE SEQUENCE [GENOMIC DNA]</scope>
    <source>
        <strain>Isolate MVZ 185903</strain>
        <strain>Isolate MVZ 185904</strain>
    </source>
</reference>
<sequence length="379" mass="42716">MTNIRKTHPLLKIINSSFVDLPAPSSLSSWWNFGSLLGVCLGVQILTGLFLAMHYTSDTATAFNSVTHICRDVNYGWLLRYLHANGASMFFICLYLHVGRGLYYGSYTYSETWNIGILLLFAVMATAFMGYVLPWGQMSFWGATVITNLLSAIPYIGTELVQWIWGGFSVDKATLTRFFAFHFLLPFIVAALVMVHLLFLHETGSNNPTGIPSDSDMIPFHPYYTIKDILGFLIMLTALSMLVLFSPDLLGDPDNYIPANPLNTPPHIKPEWYFLFAYAILRSIPNKLGGVLALVMSILILAIVPILHVSKQRSMMFRPLSQCLFWLLVAVLFTLTWIGGQPVEHPYIIIGQTASVLYFLIILIFMPTTSLMENYLLKW</sequence>
<protein>
    <recommendedName>
        <fullName>Cytochrome b</fullName>
    </recommendedName>
    <alternativeName>
        <fullName>Complex III subunit 3</fullName>
    </alternativeName>
    <alternativeName>
        <fullName>Complex III subunit III</fullName>
    </alternativeName>
    <alternativeName>
        <fullName>Cytochrome b-c1 complex subunit 3</fullName>
    </alternativeName>
    <alternativeName>
        <fullName>Ubiquinol-cytochrome-c reductase complex cytochrome b subunit</fullName>
    </alternativeName>
</protein>
<comment type="function">
    <text evidence="2">Component of the ubiquinol-cytochrome c reductase complex (complex III or cytochrome b-c1 complex) that is part of the mitochondrial respiratory chain. The b-c1 complex mediates electron transfer from ubiquinol to cytochrome c. Contributes to the generation of a proton gradient across the mitochondrial membrane that is then used for ATP synthesis.</text>
</comment>
<comment type="cofactor">
    <cofactor evidence="2">
        <name>heme b</name>
        <dbReference type="ChEBI" id="CHEBI:60344"/>
    </cofactor>
    <text evidence="2">Binds 2 heme b groups non-covalently.</text>
</comment>
<comment type="subunit">
    <text evidence="2">The cytochrome bc1 complex contains 11 subunits: 3 respiratory subunits (MT-CYB, CYC1 and UQCRFS1), 2 core proteins (UQCRC1 and UQCRC2) and 6 low-molecular weight proteins (UQCRH/QCR6, UQCRB/QCR7, UQCRQ/QCR8, UQCR10/QCR9, UQCR11/QCR10 and a cleavage product of UQCRFS1). This cytochrome bc1 complex then forms a dimer.</text>
</comment>
<comment type="subcellular location">
    <subcellularLocation>
        <location evidence="2">Mitochondrion inner membrane</location>
        <topology evidence="2">Multi-pass membrane protein</topology>
    </subcellularLocation>
</comment>
<comment type="miscellaneous">
    <text evidence="1">Heme 1 (or BL or b562) is low-potential and absorbs at about 562 nm, and heme 2 (or BH or b566) is high-potential and absorbs at about 566 nm.</text>
</comment>
<comment type="similarity">
    <text evidence="3 4">Belongs to the cytochrome b family.</text>
</comment>
<comment type="caution">
    <text evidence="2">The full-length protein contains only eight transmembrane helices, not nine as predicted by bioinformatics tools.</text>
</comment>
<name>CYB_PYGBL</name>